<accession>Q6GGX2</accession>
<dbReference type="EMBL" id="BX571856">
    <property type="protein sequence ID" value="CAG40445.1"/>
    <property type="molecule type" value="Genomic_DNA"/>
</dbReference>
<dbReference type="RefSeq" id="WP_000414703.1">
    <property type="nucleotide sequence ID" value="NC_002952.2"/>
</dbReference>
<dbReference type="SMR" id="Q6GGX2"/>
<dbReference type="KEGG" id="sar:SAR1448"/>
<dbReference type="HOGENOM" id="CLU_000960_28_3_9"/>
<dbReference type="Proteomes" id="UP000000596">
    <property type="component" value="Chromosome"/>
</dbReference>
<dbReference type="GO" id="GO:0005886">
    <property type="term" value="C:plasma membrane"/>
    <property type="evidence" value="ECO:0007669"/>
    <property type="project" value="UniProtKB-SubCell"/>
</dbReference>
<dbReference type="GO" id="GO:0022857">
    <property type="term" value="F:transmembrane transporter activity"/>
    <property type="evidence" value="ECO:0007669"/>
    <property type="project" value="InterPro"/>
</dbReference>
<dbReference type="GO" id="GO:0046677">
    <property type="term" value="P:response to antibiotic"/>
    <property type="evidence" value="ECO:0007669"/>
    <property type="project" value="UniProtKB-KW"/>
</dbReference>
<dbReference type="CDD" id="cd17321">
    <property type="entry name" value="MFS_MMR_MDR_like"/>
    <property type="match status" value="1"/>
</dbReference>
<dbReference type="FunFam" id="1.20.1250.20:FF:000252">
    <property type="entry name" value="Quinolone resistance protein NorB"/>
    <property type="match status" value="1"/>
</dbReference>
<dbReference type="FunFam" id="1.20.1720.10:FF:000015">
    <property type="entry name" value="Quinolone resistance protein NorB"/>
    <property type="match status" value="1"/>
</dbReference>
<dbReference type="Gene3D" id="1.20.1250.20">
    <property type="entry name" value="MFS general substrate transporter like domains"/>
    <property type="match status" value="1"/>
</dbReference>
<dbReference type="Gene3D" id="1.20.1720.10">
    <property type="entry name" value="Multidrug resistance protein D"/>
    <property type="match status" value="1"/>
</dbReference>
<dbReference type="InterPro" id="IPR011701">
    <property type="entry name" value="MFS"/>
</dbReference>
<dbReference type="InterPro" id="IPR020846">
    <property type="entry name" value="MFS_dom"/>
</dbReference>
<dbReference type="InterPro" id="IPR036259">
    <property type="entry name" value="MFS_trans_sf"/>
</dbReference>
<dbReference type="PANTHER" id="PTHR42718">
    <property type="entry name" value="MAJOR FACILITATOR SUPERFAMILY MULTIDRUG TRANSPORTER MFSC"/>
    <property type="match status" value="1"/>
</dbReference>
<dbReference type="PANTHER" id="PTHR42718:SF9">
    <property type="entry name" value="MAJOR FACILITATOR SUPERFAMILY MULTIDRUG TRANSPORTER MFSC"/>
    <property type="match status" value="1"/>
</dbReference>
<dbReference type="Pfam" id="PF07690">
    <property type="entry name" value="MFS_1"/>
    <property type="match status" value="1"/>
</dbReference>
<dbReference type="SUPFAM" id="SSF103473">
    <property type="entry name" value="MFS general substrate transporter"/>
    <property type="match status" value="1"/>
</dbReference>
<dbReference type="PROSITE" id="PS50850">
    <property type="entry name" value="MFS"/>
    <property type="match status" value="1"/>
</dbReference>
<feature type="chain" id="PRO_0000361958" description="Quinolone resistance protein NorB">
    <location>
        <begin position="1"/>
        <end position="463"/>
    </location>
</feature>
<feature type="transmembrane region" description="Helical" evidence="2">
    <location>
        <begin position="17"/>
        <end position="37"/>
    </location>
</feature>
<feature type="transmembrane region" description="Helical" evidence="2">
    <location>
        <begin position="53"/>
        <end position="73"/>
    </location>
</feature>
<feature type="transmembrane region" description="Helical" evidence="2">
    <location>
        <begin position="86"/>
        <end position="106"/>
    </location>
</feature>
<feature type="transmembrane region" description="Helical" evidence="2">
    <location>
        <begin position="107"/>
        <end position="127"/>
    </location>
</feature>
<feature type="transmembrane region" description="Helical" evidence="2">
    <location>
        <begin position="142"/>
        <end position="162"/>
    </location>
</feature>
<feature type="transmembrane region" description="Helical" evidence="2">
    <location>
        <begin position="165"/>
        <end position="185"/>
    </location>
</feature>
<feature type="transmembrane region" description="Helical" evidence="2">
    <location>
        <begin position="201"/>
        <end position="221"/>
    </location>
</feature>
<feature type="transmembrane region" description="Helical" evidence="2">
    <location>
        <begin position="230"/>
        <end position="250"/>
    </location>
</feature>
<feature type="transmembrane region" description="Helical" evidence="2">
    <location>
        <begin position="273"/>
        <end position="293"/>
    </location>
</feature>
<feature type="transmembrane region" description="Helical" evidence="2">
    <location>
        <begin position="299"/>
        <end position="319"/>
    </location>
</feature>
<feature type="transmembrane region" description="Helical" evidence="2">
    <location>
        <begin position="334"/>
        <end position="354"/>
    </location>
</feature>
<feature type="transmembrane region" description="Helical" evidence="2">
    <location>
        <begin position="357"/>
        <end position="377"/>
    </location>
</feature>
<feature type="transmembrane region" description="Helical" evidence="2">
    <location>
        <begin position="403"/>
        <end position="423"/>
    </location>
</feature>
<feature type="transmembrane region" description="Helical" evidence="2">
    <location>
        <begin position="435"/>
        <end position="455"/>
    </location>
</feature>
<keyword id="KW-0046">Antibiotic resistance</keyword>
<keyword id="KW-1003">Cell membrane</keyword>
<keyword id="KW-0472">Membrane</keyword>
<keyword id="KW-0812">Transmembrane</keyword>
<keyword id="KW-1133">Transmembrane helix</keyword>
<keyword id="KW-0813">Transport</keyword>
<gene>
    <name type="primary">norB</name>
    <name type="ordered locus">SAR1448</name>
</gene>
<reference key="1">
    <citation type="journal article" date="2004" name="Proc. Natl. Acad. Sci. U.S.A.">
        <title>Complete genomes of two clinical Staphylococcus aureus strains: evidence for the rapid evolution of virulence and drug resistance.</title>
        <authorList>
            <person name="Holden M.T.G."/>
            <person name="Feil E.J."/>
            <person name="Lindsay J.A."/>
            <person name="Peacock S.J."/>
            <person name="Day N.P.J."/>
            <person name="Enright M.C."/>
            <person name="Foster T.J."/>
            <person name="Moore C.E."/>
            <person name="Hurst L."/>
            <person name="Atkin R."/>
            <person name="Barron A."/>
            <person name="Bason N."/>
            <person name="Bentley S.D."/>
            <person name="Chillingworth C."/>
            <person name="Chillingworth T."/>
            <person name="Churcher C."/>
            <person name="Clark L."/>
            <person name="Corton C."/>
            <person name="Cronin A."/>
            <person name="Doggett J."/>
            <person name="Dowd L."/>
            <person name="Feltwell T."/>
            <person name="Hance Z."/>
            <person name="Harris B."/>
            <person name="Hauser H."/>
            <person name="Holroyd S."/>
            <person name="Jagels K."/>
            <person name="James K.D."/>
            <person name="Lennard N."/>
            <person name="Line A."/>
            <person name="Mayes R."/>
            <person name="Moule S."/>
            <person name="Mungall K."/>
            <person name="Ormond D."/>
            <person name="Quail M.A."/>
            <person name="Rabbinowitsch E."/>
            <person name="Rutherford K.M."/>
            <person name="Sanders M."/>
            <person name="Sharp S."/>
            <person name="Simmonds M."/>
            <person name="Stevens K."/>
            <person name="Whitehead S."/>
            <person name="Barrell B.G."/>
            <person name="Spratt B.G."/>
            <person name="Parkhill J."/>
        </authorList>
    </citation>
    <scope>NUCLEOTIDE SEQUENCE [LARGE SCALE GENOMIC DNA]</scope>
    <source>
        <strain>MRSA252</strain>
    </source>
</reference>
<sequence length="463" mass="49331">MEKPSRETFEGNNKLLIGIVLSVITFWLFAQSLVNVVPILEDSFNTDIGTVNIAVSITALFSGMFVVGAGGLADKYGRIKLTNIGIILNILGSLLIIISNIPLLLIIGRLIQGLSAACIMPATLSIIKSYYIGKDRQRALSYWSIGSWGGSGVCSFFGGAVATLLGWRWIFILSIIISLIALFLIKGTPETKSKSISLNKFDIKGLVLLVIMLLSLNILITKGSELGVTSLLFITILAIAIVSFSLFIVLEKRATNPLIDFKLFKNKAYTGATASNFLLNGVAGTLIVANTFVQRGLGYSSLQAGSLSITYLVMVLIMIRVGEKLLQTFGCKKPMLIGTAVLIVGECLISLTFLPEILYVICCIIGYLFFGLGLGIYATPSTDTAIANAPLEKVGVAAGIYKMASALGGAFGVALSGAVYAIVSNMTNIDTGAMIALWLNAGMGILSFVIILLLVPKQNDTQL</sequence>
<organism>
    <name type="scientific">Staphylococcus aureus (strain MRSA252)</name>
    <dbReference type="NCBI Taxonomy" id="282458"/>
    <lineage>
        <taxon>Bacteria</taxon>
        <taxon>Bacillati</taxon>
        <taxon>Bacillota</taxon>
        <taxon>Bacilli</taxon>
        <taxon>Bacillales</taxon>
        <taxon>Staphylococcaceae</taxon>
        <taxon>Staphylococcus</taxon>
    </lineage>
</organism>
<proteinExistence type="inferred from homology"/>
<comment type="function">
    <text evidence="1">Multidrug efflux pump that acts independently of NorA and is one of the factors that confers resistance against diverse quinolones and chemical compounds.</text>
</comment>
<comment type="subcellular location">
    <subcellularLocation>
        <location evidence="3">Cell membrane</location>
        <topology evidence="3">Multi-pass membrane protein</topology>
    </subcellularLocation>
</comment>
<comment type="similarity">
    <text evidence="3">Belongs to the major facilitator superfamily. TCR/Tet family.</text>
</comment>
<name>NORB_STAAR</name>
<evidence type="ECO:0000250" key="1"/>
<evidence type="ECO:0000255" key="2"/>
<evidence type="ECO:0000305" key="3"/>
<protein>
    <recommendedName>
        <fullName>Quinolone resistance protein NorB</fullName>
    </recommendedName>
</protein>